<name>CSF1_EREGS</name>
<reference key="1">
    <citation type="journal article" date="2004" name="Science">
        <title>The Ashbya gossypii genome as a tool for mapping the ancient Saccharomyces cerevisiae genome.</title>
        <authorList>
            <person name="Dietrich F.S."/>
            <person name="Voegeli S."/>
            <person name="Brachat S."/>
            <person name="Lerch A."/>
            <person name="Gates K."/>
            <person name="Steiner S."/>
            <person name="Mohr C."/>
            <person name="Poehlmann R."/>
            <person name="Luedi P."/>
            <person name="Choi S."/>
            <person name="Wing R.A."/>
            <person name="Flavier A."/>
            <person name="Gaffney T.D."/>
            <person name="Philippsen P."/>
        </authorList>
    </citation>
    <scope>NUCLEOTIDE SEQUENCE [LARGE SCALE GENOMIC DNA]</scope>
    <source>
        <strain>ATCC 10895 / CBS 109.51 / FGSC 9923 / NRRL Y-1056</strain>
    </source>
</reference>
<reference key="2">
    <citation type="journal article" date="2013" name="G3 (Bethesda)">
        <title>Genomes of Ashbya fungi isolated from insects reveal four mating-type loci, numerous translocations, lack of transposons, and distinct gene duplications.</title>
        <authorList>
            <person name="Dietrich F.S."/>
            <person name="Voegeli S."/>
            <person name="Kuo S."/>
            <person name="Philippsen P."/>
        </authorList>
    </citation>
    <scope>GENOME REANNOTATION</scope>
    <source>
        <strain>ATCC 10895 / CBS 109.51 / FGSC 9923 / NRRL Y-1056</strain>
    </source>
</reference>
<dbReference type="EMBL" id="AE016820">
    <property type="protein sequence ID" value="AAS54577.1"/>
    <property type="molecule type" value="Genomic_DNA"/>
</dbReference>
<dbReference type="RefSeq" id="NP_986753.1">
    <property type="nucleotide sequence ID" value="NM_211815.2"/>
</dbReference>
<dbReference type="FunCoup" id="Q74ZX0">
    <property type="interactions" value="84"/>
</dbReference>
<dbReference type="GlyCosmos" id="Q74ZX0">
    <property type="glycosylation" value="26 sites, No reported glycans"/>
</dbReference>
<dbReference type="EnsemblFungi" id="AAS54577">
    <property type="protein sequence ID" value="AAS54577"/>
    <property type="gene ID" value="AGOS_AGR088W"/>
</dbReference>
<dbReference type="GeneID" id="4623055"/>
<dbReference type="KEGG" id="ago:AGOS_AGR088W"/>
<dbReference type="eggNOG" id="KOG3596">
    <property type="taxonomic scope" value="Eukaryota"/>
</dbReference>
<dbReference type="HOGENOM" id="CLU_000126_1_0_1"/>
<dbReference type="InParanoid" id="Q74ZX0"/>
<dbReference type="OMA" id="YGLEWFI"/>
<dbReference type="OrthoDB" id="10051416at2759"/>
<dbReference type="Proteomes" id="UP000000591">
    <property type="component" value="Chromosome VII"/>
</dbReference>
<dbReference type="GO" id="GO:0016020">
    <property type="term" value="C:membrane"/>
    <property type="evidence" value="ECO:0007669"/>
    <property type="project" value="UniProtKB-SubCell"/>
</dbReference>
<dbReference type="GO" id="GO:0006113">
    <property type="term" value="P:fermentation"/>
    <property type="evidence" value="ECO:0007669"/>
    <property type="project" value="InterPro"/>
</dbReference>
<dbReference type="GO" id="GO:0055091">
    <property type="term" value="P:phospholipid homeostasis"/>
    <property type="evidence" value="ECO:0000318"/>
    <property type="project" value="GO_Central"/>
</dbReference>
<dbReference type="InterPro" id="IPR029636">
    <property type="entry name" value="Csf1"/>
</dbReference>
<dbReference type="InterPro" id="IPR056779">
    <property type="entry name" value="Csf1_C"/>
</dbReference>
<dbReference type="InterPro" id="IPR048636">
    <property type="entry name" value="Csf1_N"/>
</dbReference>
<dbReference type="PANTHER" id="PTHR32085">
    <property type="entry name" value="PROTEIN CSF1"/>
    <property type="match status" value="1"/>
</dbReference>
<dbReference type="PANTHER" id="PTHR32085:SF3">
    <property type="entry name" value="PROTEIN CSF1"/>
    <property type="match status" value="1"/>
</dbReference>
<dbReference type="Pfam" id="PF25038">
    <property type="entry name" value="Csf1_C"/>
    <property type="match status" value="1"/>
</dbReference>
<dbReference type="Pfam" id="PF21678">
    <property type="entry name" value="Csf1_N"/>
    <property type="match status" value="1"/>
</dbReference>
<sequence length="2887" mass="327181">MVIFAIFYVGRVLGYIVSKAANLVLWKQYRVTVSIQSLVFSPLAGKVHFKNVSVTSQDQLISVLKGTITWRYWLIGRYRRSGTADGARRCRFALKFEGFEYFVYNRNGVYDRIARELDGEDTSAEPTVSVPSVEEVIAELQDDPLIRRFLPVEFLHNKGAIVLGNKQTHSVAIMNYEKLAGTVSIEVPDDTRAPSSFRTEAKISNCTVAIKPNISYEVDNPVKIYVEPKRTARLWKKYKTLLGTVLEATLHAKRKKEQHQTPKWYDNWRGLSMYDVNLDEELDEEVKFDIEHHEYAKCTTVLKADQMDVTYSYGMPGTARVTDSDNAENPLLERPELDHSVDILVYDANCTYGPWANRQVQQCLRVFSPTVCRNFKLRTPEEIAQQTEPAAFKLSVTIMEDSVLRVPMKESSKDAAFLEKYKQTRDETRPFGWIDIRIAKESNITVRMAAYPTENGFENILHANLVDTTISTSVNHDTLLKAKSHDITVDFSYPYGWQDKAEWNFNVCSTQAELFVLRDHVYLISDLVTDFSGGEEVLYEQFRPFDYRFRWDIRGYSAYLNVNDANIINNPIDFGENCYLSVHGDDAEITFSLPITSIIQKYVTVDFNIFTPHFSLFLNAPPWHTFSELLHYKEIGRSKNFNIKGSYTSYSEVDVDNVDALNIACETDYIVVLCYGVILKCMLNVKVNYFGEMVHFRTTEEYVEELQRRNKQNPSTCRPFNSDGNVHDSDVVATESNEIIDASFDAFGGPPTIKKSALKRSINELDVWFTFISKGGCFFFPENIYKFDACLGFYFDNLEASLRFLNYYVDAAVSLDSIYFKRHTDIDARTLFKVIEDIGIPIDASDAYLSQFSFRLHKMLGIMPSEESYACEFDVRVDTLDVHCDLAVLKAFVNTLRNLAFGFKDVENSLQYEREQVFDLNKISCVIENVTVKLQNVDKDEDIWLSLNLPVTTLTSFDLANERYSRRSDLSIPELLFGIYRGDSESTCLGAFSTGVTVTLFERFEQFARCRVLQRKHILVNDAPFHRCSFMLPPEYKKMPIYRSLYGCIPPSSSLPLFPEPISADNFEVIFEKLLGEIYQEYASDSSYQITDDSISSTEHDYHNQTVNAAIGTSSSLFIRSQNHQQTLSSFIVEFDPIDGYLDLSATEFMLEIYKYLTEVSLDEAIDSLEIGIINQFIQTFGEDNGISEVRVLCPNISLSATNKQSKFSMFKLSSKIKNLDITSRIKSSDPNLKPDPEKTTLCYKIDYIRANIVQDGIVVPPKQPSQLFSCSIELLEGYLSYDKLSLLDNNVQSCSVTLSPGTDKLLFEFLNPFISTFDLLQRELSSFEDTLLASKREFLLNILRGGRDYEIQHDPPVITKPANITRFSNRHIRSAESWRIIMRLRHILNYLPQEWHQSFTRHLGTQDFTSPEEAGKEFLSIFSDWRSWEPTDVQGSFVHEKVFTKKRSRPFAALQGFTFSSDDIRLNMKDDARVPITVKGVTLGIRNNGLAPEQVDGRTEGSMPDPDYISFCTTDEVVMRVDRSFVKTLKEFRDLIHRFKIGGPVGTAKHDNVSLFSNITFQFGKLYVVAKLAGVYLRICLDNLSALMLTSQSSVESKVISSSTLSFDHMQAILGYRSFRFMTIDIDMFSVLLHYLPGQGCYSIDWKARKFHIDSSSATTKDLTESLPYVRDEIKYLVEALVPELFAEPPIERESSGNKIHAVLFQGQVANITLKLQILSPFIILYCAENFELQAESTDSVIFDLNSGESYMEISSAKQKLDYFKYTHTCLKLSGTSSSARLFEHISCDIGILKLSVFDLKTRITDLLQDIKAALFSMKSLSDILNISQSSPTASAFGSWFSILPDNLSLQATYAGLLLGFGHTLYILEFNNFEAKHTRDGLPDAITPRPCFKVDHSIESASFLIKDRRIDDRLAKVVDFAVNFNMVHDTDLCIQSVQIESTHLKITLAPMTVVRLLSLINEFGIIRKQFTEESIYTPSSAHNNSTATECLEPSVWRLIIKSGHILSHDFSIVWLFDIPNSSADGLICGYDRLFSVYEKPYGKLTLLNAYFSAAKILASEADFYSSVVRKQRINTSYLSDMQLRYWFTEDSENTDLFIRIHGAKLAVDISAEIVTLLEETIQSIQTFNNLKKALVDPFRTKKQDSDISKEPYNWNNQLATGVRSLNCIINYAGVTLKLHSHDGRGDASPLELTSPSYKVAIDYKYFPNLEKTHRFRTLITATPTHNTFYSTSAFLIHDLCYRFSKLLKTSSTENKSSSASTSSSIKVEGSDNSTLLGSIDLVIILNVGKQEVTFSCEPKAKVQATVGFEKFDIKIFNNNINDEESLCLAIEIENLMTNSRHIYSREVCASLKLRHISMVFDIMGSQVRRIYGSTLISSPLFYFNMKQLQDLKLFIDQWFPQKTPMNTGSYPEGVLVDDISRSIGSKFYKGSSSSSFTWGYSVIVAGSCAEIELGPSLGVLNVTSEDVWAISKQQVDWSQQLDLNMGKLDVTSSGRLGGNFLVRNAHLSLELKWPNPKDFFQVPLVCVKLGSDTVDTKLSFDYHTFFISSLKQGYASLFNERDEDGSLADLLSVTVSFESVNIFLTALAAANISDIKNSITRLKKDNELSYLSSFLASDQPSDEPEEDGGIFDTLSLLRTQLSLNLGVFRLQISPTSLFDSDVLILTATKMMANTGIQADIKIKTDLHWQLDDVSLALLPFNNSLDESYLATMEVGKYIELSSTIQGGAIFSAPSIVVNMTTWQEPQSNVIELLYSTSFGGTVKIRWNLGPISFIKDMWQAHMNAMQLREGYYHGLAESGVAVTPLNSKAVPLEMHLGSDYQYLPLQEPDIEMPRIKDLGDATPPIEWFGVNRTKFPGFTHQFVIVPLQKLARTAEKEYEKILGRAL</sequence>
<keyword id="KW-0325">Glycoprotein</keyword>
<keyword id="KW-0472">Membrane</keyword>
<keyword id="KW-1185">Reference proteome</keyword>
<keyword id="KW-0735">Signal-anchor</keyword>
<keyword id="KW-0812">Transmembrane</keyword>
<keyword id="KW-1133">Transmembrane helix</keyword>
<gene>
    <name type="primary">CSF1</name>
    <name type="ordered locus">AGR088W</name>
</gene>
<protein>
    <recommendedName>
        <fullName>Protein CSF1</fullName>
    </recommendedName>
</protein>
<accession>Q74ZX0</accession>
<comment type="function">
    <text evidence="1">Required for the glucose and other nutrients uptake at low temperature.</text>
</comment>
<comment type="subcellular location">
    <subcellularLocation>
        <location evidence="3">Membrane</location>
        <topology evidence="3">Single-pass type II membrane protein</topology>
    </subcellularLocation>
</comment>
<comment type="similarity">
    <text evidence="3">Belongs to the CSF1 family.</text>
</comment>
<organism>
    <name type="scientific">Eremothecium gossypii (strain ATCC 10895 / CBS 109.51 / FGSC 9923 / NRRL Y-1056)</name>
    <name type="common">Yeast</name>
    <name type="synonym">Ashbya gossypii</name>
    <dbReference type="NCBI Taxonomy" id="284811"/>
    <lineage>
        <taxon>Eukaryota</taxon>
        <taxon>Fungi</taxon>
        <taxon>Dikarya</taxon>
        <taxon>Ascomycota</taxon>
        <taxon>Saccharomycotina</taxon>
        <taxon>Saccharomycetes</taxon>
        <taxon>Saccharomycetales</taxon>
        <taxon>Saccharomycetaceae</taxon>
        <taxon>Eremothecium</taxon>
    </lineage>
</organism>
<evidence type="ECO:0000250" key="1"/>
<evidence type="ECO:0000255" key="2"/>
<evidence type="ECO:0000305" key="3"/>
<feature type="chain" id="PRO_0000228142" description="Protein CSF1">
    <location>
        <begin position="1"/>
        <end position="2887"/>
    </location>
</feature>
<feature type="topological domain" description="Cytoplasmic" evidence="2">
    <location>
        <position position="1"/>
    </location>
</feature>
<feature type="transmembrane region" description="Helical; Signal-anchor for type II membrane protein" evidence="2">
    <location>
        <begin position="2"/>
        <end position="22"/>
    </location>
</feature>
<feature type="topological domain" description="Extracellular" evidence="2">
    <location>
        <begin position="23"/>
        <end position="2887"/>
    </location>
</feature>
<feature type="glycosylation site" description="N-linked (GlcNAc...) asparagine" evidence="2">
    <location>
        <position position="51"/>
    </location>
</feature>
<feature type="glycosylation site" description="N-linked (GlcNAc...) asparagine" evidence="2">
    <location>
        <position position="205"/>
    </location>
</feature>
<feature type="glycosylation site" description="N-linked (GlcNAc...) asparagine" evidence="2">
    <location>
        <position position="213"/>
    </location>
</feature>
<feature type="glycosylation site" description="N-linked (GlcNAc...) asparagine" evidence="2">
    <location>
        <position position="349"/>
    </location>
</feature>
<feature type="glycosylation site" description="N-linked (GlcNAc...) asparagine" evidence="2">
    <location>
        <position position="443"/>
    </location>
</feature>
<feature type="glycosylation site" description="N-linked (GlcNAc...) asparagine" evidence="2">
    <location>
        <position position="929"/>
    </location>
</feature>
<feature type="glycosylation site" description="N-linked (GlcNAc...) asparagine" evidence="2">
    <location>
        <position position="1104"/>
    </location>
</feature>
<feature type="glycosylation site" description="N-linked (GlcNAc...) asparagine" evidence="2">
    <location>
        <position position="1196"/>
    </location>
</feature>
<feature type="glycosylation site" description="N-linked (GlcNAc...) asparagine" evidence="2">
    <location>
        <position position="1364"/>
    </location>
</feature>
<feature type="glycosylation site" description="N-linked (GlcNAc...) asparagine" evidence="2">
    <location>
        <position position="1553"/>
    </location>
</feature>
<feature type="glycosylation site" description="N-linked (GlcNAc...) asparagine" evidence="2">
    <location>
        <position position="1559"/>
    </location>
</feature>
<feature type="glycosylation site" description="N-linked (GlcNAc...) asparagine" evidence="2">
    <location>
        <position position="1584"/>
    </location>
</feature>
<feature type="glycosylation site" description="N-linked (GlcNAc...) asparagine" evidence="2">
    <location>
        <position position="1712"/>
    </location>
</feature>
<feature type="glycosylation site" description="N-linked (GlcNAc...) asparagine" evidence="2">
    <location>
        <position position="1827"/>
    </location>
</feature>
<feature type="glycosylation site" description="N-linked (GlcNAc...) asparagine" evidence="2">
    <location>
        <position position="1848"/>
    </location>
</feature>
<feature type="glycosylation site" description="N-linked (GlcNAc...) asparagine" evidence="2">
    <location>
        <position position="1984"/>
    </location>
</feature>
<feature type="glycosylation site" description="N-linked (GlcNAc...) asparagine" evidence="2">
    <location>
        <position position="1985"/>
    </location>
</feature>
<feature type="glycosylation site" description="N-linked (GlcNAc...) asparagine" evidence="2">
    <location>
        <position position="2021"/>
    </location>
</feature>
<feature type="glycosylation site" description="N-linked (GlcNAc...) asparagine" evidence="2">
    <location>
        <position position="2075"/>
    </location>
</feature>
<feature type="glycosylation site" description="N-linked (GlcNAc...) asparagine" evidence="2">
    <location>
        <position position="2255"/>
    </location>
</feature>
<feature type="glycosylation site" description="N-linked (GlcNAc...) asparagine" evidence="2">
    <location>
        <position position="2273"/>
    </location>
</feature>
<feature type="glycosylation site" description="N-linked (GlcNAc...) asparagine" evidence="2">
    <location>
        <position position="2462"/>
    </location>
</feature>
<feature type="glycosylation site" description="N-linked (GlcNAc...) asparagine" evidence="2">
    <location>
        <position position="2592"/>
    </location>
</feature>
<feature type="glycosylation site" description="N-linked (GlcNAc...) asparagine" evidence="2">
    <location>
        <position position="2702"/>
    </location>
</feature>
<feature type="glycosylation site" description="N-linked (GlcNAc...) asparagine" evidence="2">
    <location>
        <position position="2739"/>
    </location>
</feature>
<feature type="glycosylation site" description="N-linked (GlcNAc...) asparagine" evidence="2">
    <location>
        <position position="2852"/>
    </location>
</feature>
<proteinExistence type="inferred from homology"/>